<keyword id="KW-0007">Acetylation</keyword>
<keyword id="KW-0597">Phosphoprotein</keyword>
<keyword id="KW-1185">Reference proteome</keyword>
<organism>
    <name type="scientific">Mus musculus</name>
    <name type="common">Mouse</name>
    <dbReference type="NCBI Taxonomy" id="10090"/>
    <lineage>
        <taxon>Eukaryota</taxon>
        <taxon>Metazoa</taxon>
        <taxon>Chordata</taxon>
        <taxon>Craniata</taxon>
        <taxon>Vertebrata</taxon>
        <taxon>Euteleostomi</taxon>
        <taxon>Mammalia</taxon>
        <taxon>Eutheria</taxon>
        <taxon>Euarchontoglires</taxon>
        <taxon>Glires</taxon>
        <taxon>Rodentia</taxon>
        <taxon>Myomorpha</taxon>
        <taxon>Muroidea</taxon>
        <taxon>Muridae</taxon>
        <taxon>Murinae</taxon>
        <taxon>Mus</taxon>
        <taxon>Mus</taxon>
    </lineage>
</organism>
<name>MTL26_MOUSE</name>
<protein>
    <recommendedName>
        <fullName evidence="3">Methyltransferase-like 26</fullName>
    </recommendedName>
</protein>
<feature type="chain" id="PRO_0000337115" description="Methyltransferase-like 26">
    <location>
        <begin position="1"/>
        <end position="204"/>
    </location>
</feature>
<feature type="modified residue" description="N-acetylmethionine" evidence="1">
    <location>
        <position position="1"/>
    </location>
</feature>
<feature type="modified residue" description="Phosphoserine" evidence="4">
    <location>
        <position position="149"/>
    </location>
</feature>
<comment type="similarity">
    <text evidence="2">Belongs to the UPF0585 family.</text>
</comment>
<proteinExistence type="evidence at protein level"/>
<sequence>MMMAAAAERNKEPILSVLRQYVDPAQRCVRVLEVASGSGQHAAHFAQAFPNAEWQPSDVDQRCLDSIAATTRAQGLSNVKAPLYLDVTWEWEQWGGIPPRSLDLLLCINMIHISPLNCTEGLFRAAGHLLKTKAVLITYGPYAVNGKISPQSNVDFDLTLRCRNPEWGLRDTVLLEELGQASGLVLERMVDMPANNKCLIFRKE</sequence>
<reference key="1">
    <citation type="journal article" date="2005" name="Science">
        <title>The transcriptional landscape of the mammalian genome.</title>
        <authorList>
            <person name="Carninci P."/>
            <person name="Kasukawa T."/>
            <person name="Katayama S."/>
            <person name="Gough J."/>
            <person name="Frith M.C."/>
            <person name="Maeda N."/>
            <person name="Oyama R."/>
            <person name="Ravasi T."/>
            <person name="Lenhard B."/>
            <person name="Wells C."/>
            <person name="Kodzius R."/>
            <person name="Shimokawa K."/>
            <person name="Bajic V.B."/>
            <person name="Brenner S.E."/>
            <person name="Batalov S."/>
            <person name="Forrest A.R."/>
            <person name="Zavolan M."/>
            <person name="Davis M.J."/>
            <person name="Wilming L.G."/>
            <person name="Aidinis V."/>
            <person name="Allen J.E."/>
            <person name="Ambesi-Impiombato A."/>
            <person name="Apweiler R."/>
            <person name="Aturaliya R.N."/>
            <person name="Bailey T.L."/>
            <person name="Bansal M."/>
            <person name="Baxter L."/>
            <person name="Beisel K.W."/>
            <person name="Bersano T."/>
            <person name="Bono H."/>
            <person name="Chalk A.M."/>
            <person name="Chiu K.P."/>
            <person name="Choudhary V."/>
            <person name="Christoffels A."/>
            <person name="Clutterbuck D.R."/>
            <person name="Crowe M.L."/>
            <person name="Dalla E."/>
            <person name="Dalrymple B.P."/>
            <person name="de Bono B."/>
            <person name="Della Gatta G."/>
            <person name="di Bernardo D."/>
            <person name="Down T."/>
            <person name="Engstrom P."/>
            <person name="Fagiolini M."/>
            <person name="Faulkner G."/>
            <person name="Fletcher C.F."/>
            <person name="Fukushima T."/>
            <person name="Furuno M."/>
            <person name="Futaki S."/>
            <person name="Gariboldi M."/>
            <person name="Georgii-Hemming P."/>
            <person name="Gingeras T.R."/>
            <person name="Gojobori T."/>
            <person name="Green R.E."/>
            <person name="Gustincich S."/>
            <person name="Harbers M."/>
            <person name="Hayashi Y."/>
            <person name="Hensch T.K."/>
            <person name="Hirokawa N."/>
            <person name="Hill D."/>
            <person name="Huminiecki L."/>
            <person name="Iacono M."/>
            <person name="Ikeo K."/>
            <person name="Iwama A."/>
            <person name="Ishikawa T."/>
            <person name="Jakt M."/>
            <person name="Kanapin A."/>
            <person name="Katoh M."/>
            <person name="Kawasawa Y."/>
            <person name="Kelso J."/>
            <person name="Kitamura H."/>
            <person name="Kitano H."/>
            <person name="Kollias G."/>
            <person name="Krishnan S.P."/>
            <person name="Kruger A."/>
            <person name="Kummerfeld S.K."/>
            <person name="Kurochkin I.V."/>
            <person name="Lareau L.F."/>
            <person name="Lazarevic D."/>
            <person name="Lipovich L."/>
            <person name="Liu J."/>
            <person name="Liuni S."/>
            <person name="McWilliam S."/>
            <person name="Madan Babu M."/>
            <person name="Madera M."/>
            <person name="Marchionni L."/>
            <person name="Matsuda H."/>
            <person name="Matsuzawa S."/>
            <person name="Miki H."/>
            <person name="Mignone F."/>
            <person name="Miyake S."/>
            <person name="Morris K."/>
            <person name="Mottagui-Tabar S."/>
            <person name="Mulder N."/>
            <person name="Nakano N."/>
            <person name="Nakauchi H."/>
            <person name="Ng P."/>
            <person name="Nilsson R."/>
            <person name="Nishiguchi S."/>
            <person name="Nishikawa S."/>
            <person name="Nori F."/>
            <person name="Ohara O."/>
            <person name="Okazaki Y."/>
            <person name="Orlando V."/>
            <person name="Pang K.C."/>
            <person name="Pavan W.J."/>
            <person name="Pavesi G."/>
            <person name="Pesole G."/>
            <person name="Petrovsky N."/>
            <person name="Piazza S."/>
            <person name="Reed J."/>
            <person name="Reid J.F."/>
            <person name="Ring B.Z."/>
            <person name="Ringwald M."/>
            <person name="Rost B."/>
            <person name="Ruan Y."/>
            <person name="Salzberg S.L."/>
            <person name="Sandelin A."/>
            <person name="Schneider C."/>
            <person name="Schoenbach C."/>
            <person name="Sekiguchi K."/>
            <person name="Semple C.A."/>
            <person name="Seno S."/>
            <person name="Sessa L."/>
            <person name="Sheng Y."/>
            <person name="Shibata Y."/>
            <person name="Shimada H."/>
            <person name="Shimada K."/>
            <person name="Silva D."/>
            <person name="Sinclair B."/>
            <person name="Sperling S."/>
            <person name="Stupka E."/>
            <person name="Sugiura K."/>
            <person name="Sultana R."/>
            <person name="Takenaka Y."/>
            <person name="Taki K."/>
            <person name="Tammoja K."/>
            <person name="Tan S.L."/>
            <person name="Tang S."/>
            <person name="Taylor M.S."/>
            <person name="Tegner J."/>
            <person name="Teichmann S.A."/>
            <person name="Ueda H.R."/>
            <person name="van Nimwegen E."/>
            <person name="Verardo R."/>
            <person name="Wei C.L."/>
            <person name="Yagi K."/>
            <person name="Yamanishi H."/>
            <person name="Zabarovsky E."/>
            <person name="Zhu S."/>
            <person name="Zimmer A."/>
            <person name="Hide W."/>
            <person name="Bult C."/>
            <person name="Grimmond S.M."/>
            <person name="Teasdale R.D."/>
            <person name="Liu E.T."/>
            <person name="Brusic V."/>
            <person name="Quackenbush J."/>
            <person name="Wahlestedt C."/>
            <person name="Mattick J.S."/>
            <person name="Hume D.A."/>
            <person name="Kai C."/>
            <person name="Sasaki D."/>
            <person name="Tomaru Y."/>
            <person name="Fukuda S."/>
            <person name="Kanamori-Katayama M."/>
            <person name="Suzuki M."/>
            <person name="Aoki J."/>
            <person name="Arakawa T."/>
            <person name="Iida J."/>
            <person name="Imamura K."/>
            <person name="Itoh M."/>
            <person name="Kato T."/>
            <person name="Kawaji H."/>
            <person name="Kawagashira N."/>
            <person name="Kawashima T."/>
            <person name="Kojima M."/>
            <person name="Kondo S."/>
            <person name="Konno H."/>
            <person name="Nakano K."/>
            <person name="Ninomiya N."/>
            <person name="Nishio T."/>
            <person name="Okada M."/>
            <person name="Plessy C."/>
            <person name="Shibata K."/>
            <person name="Shiraki T."/>
            <person name="Suzuki S."/>
            <person name="Tagami M."/>
            <person name="Waki K."/>
            <person name="Watahiki A."/>
            <person name="Okamura-Oho Y."/>
            <person name="Suzuki H."/>
            <person name="Kawai J."/>
            <person name="Hayashizaki Y."/>
        </authorList>
    </citation>
    <scope>NUCLEOTIDE SEQUENCE [LARGE SCALE MRNA]</scope>
    <source>
        <strain>C57BL/6J</strain>
        <strain>NOD</strain>
        <tissue>Bone marrow</tissue>
        <tissue>Kidney</tissue>
    </source>
</reference>
<reference key="2">
    <citation type="journal article" date="2004" name="Genome Res.">
        <title>The status, quality, and expansion of the NIH full-length cDNA project: the Mammalian Gene Collection (MGC).</title>
        <authorList>
            <consortium name="The MGC Project Team"/>
        </authorList>
    </citation>
    <scope>NUCLEOTIDE SEQUENCE [LARGE SCALE MRNA]</scope>
    <source>
        <tissue>Mammary gland</tissue>
    </source>
</reference>
<reference key="3">
    <citation type="journal article" date="2007" name="Proc. Natl. Acad. Sci. U.S.A.">
        <title>Large-scale phosphorylation analysis of mouse liver.</title>
        <authorList>
            <person name="Villen J."/>
            <person name="Beausoleil S.A."/>
            <person name="Gerber S.A."/>
            <person name="Gygi S.P."/>
        </authorList>
    </citation>
    <scope>IDENTIFICATION BY MASS SPECTROMETRY [LARGE SCALE ANALYSIS]</scope>
    <source>
        <tissue>Liver</tissue>
    </source>
</reference>
<reference key="4">
    <citation type="journal article" date="2010" name="Cell">
        <title>A tissue-specific atlas of mouse protein phosphorylation and expression.</title>
        <authorList>
            <person name="Huttlin E.L."/>
            <person name="Jedrychowski M.P."/>
            <person name="Elias J.E."/>
            <person name="Goswami T."/>
            <person name="Rad R."/>
            <person name="Beausoleil S.A."/>
            <person name="Villen J."/>
            <person name="Haas W."/>
            <person name="Sowa M.E."/>
            <person name="Gygi S.P."/>
        </authorList>
    </citation>
    <scope>PHOSPHORYLATION [LARGE SCALE ANALYSIS] AT SER-149</scope>
    <scope>IDENTIFICATION BY MASS SPECTROMETRY [LARGE SCALE ANALYSIS]</scope>
    <source>
        <tissue>Brain</tissue>
        <tissue>Brown adipose tissue</tissue>
        <tissue>Heart</tissue>
        <tissue>Kidney</tissue>
        <tissue>Liver</tissue>
        <tissue>Lung</tissue>
        <tissue>Pancreas</tissue>
        <tissue>Spleen</tissue>
        <tissue>Testis</tissue>
    </source>
</reference>
<dbReference type="EMBL" id="AK002535">
    <property type="protein sequence ID" value="BAB22171.1"/>
    <property type="molecule type" value="mRNA"/>
</dbReference>
<dbReference type="EMBL" id="AK151352">
    <property type="protein sequence ID" value="BAE30328.1"/>
    <property type="molecule type" value="mRNA"/>
</dbReference>
<dbReference type="EMBL" id="AK170337">
    <property type="protein sequence ID" value="BAE41727.1"/>
    <property type="molecule type" value="mRNA"/>
</dbReference>
<dbReference type="EMBL" id="BC069266">
    <property type="protein sequence ID" value="AAH69266.1"/>
    <property type="molecule type" value="mRNA"/>
</dbReference>
<dbReference type="CCDS" id="CCDS28536.1"/>
<dbReference type="RefSeq" id="NP_080962.1">
    <property type="nucleotide sequence ID" value="NM_026686.2"/>
</dbReference>
<dbReference type="SMR" id="Q9DCS2"/>
<dbReference type="FunCoup" id="Q9DCS2">
    <property type="interactions" value="58"/>
</dbReference>
<dbReference type="STRING" id="10090.ENSMUSP00000026827"/>
<dbReference type="GlyGen" id="Q9DCS2">
    <property type="glycosylation" value="1 site, 1 O-linked glycan (1 site)"/>
</dbReference>
<dbReference type="iPTMnet" id="Q9DCS2"/>
<dbReference type="PhosphoSitePlus" id="Q9DCS2"/>
<dbReference type="SwissPalm" id="Q9DCS2"/>
<dbReference type="jPOST" id="Q9DCS2"/>
<dbReference type="PaxDb" id="10090-ENSMUSP00000026827"/>
<dbReference type="PeptideAtlas" id="Q9DCS2"/>
<dbReference type="ProteomicsDB" id="287635"/>
<dbReference type="Pumba" id="Q9DCS2"/>
<dbReference type="Antibodypedia" id="51680">
    <property type="antibodies" value="73 antibodies from 18 providers"/>
</dbReference>
<dbReference type="Ensembl" id="ENSMUST00000026827.16">
    <property type="protein sequence ID" value="ENSMUSP00000026827.9"/>
    <property type="gene ID" value="ENSMUSG00000025731.17"/>
</dbReference>
<dbReference type="GeneID" id="68347"/>
<dbReference type="KEGG" id="mmu:68347"/>
<dbReference type="UCSC" id="uc008bcl.2">
    <property type="organism name" value="mouse"/>
</dbReference>
<dbReference type="AGR" id="MGI:1915597"/>
<dbReference type="CTD" id="84326"/>
<dbReference type="MGI" id="MGI:1915597">
    <property type="gene designation" value="Mettl26"/>
</dbReference>
<dbReference type="VEuPathDB" id="HostDB:ENSMUSG00000025731"/>
<dbReference type="eggNOG" id="ENOG502QVX9">
    <property type="taxonomic scope" value="Eukaryota"/>
</dbReference>
<dbReference type="GeneTree" id="ENSGT00390000010750"/>
<dbReference type="HOGENOM" id="CLU_067698_2_0_1"/>
<dbReference type="InParanoid" id="Q9DCS2"/>
<dbReference type="OMA" id="YLYGPYK"/>
<dbReference type="OrthoDB" id="10258744at2759"/>
<dbReference type="PhylomeDB" id="Q9DCS2"/>
<dbReference type="TreeFam" id="TF315025"/>
<dbReference type="BioGRID-ORCS" id="68347">
    <property type="hits" value="4 hits in 78 CRISPR screens"/>
</dbReference>
<dbReference type="ChiTaRS" id="Mettl26">
    <property type="organism name" value="mouse"/>
</dbReference>
<dbReference type="PRO" id="PR:Q9DCS2"/>
<dbReference type="Proteomes" id="UP000000589">
    <property type="component" value="Chromosome 17"/>
</dbReference>
<dbReference type="RNAct" id="Q9DCS2">
    <property type="molecule type" value="protein"/>
</dbReference>
<dbReference type="Bgee" id="ENSMUSG00000025731">
    <property type="expression patterns" value="Expressed in right kidney and 238 other cell types or tissues"/>
</dbReference>
<dbReference type="ExpressionAtlas" id="Q9DCS2">
    <property type="expression patterns" value="baseline and differential"/>
</dbReference>
<dbReference type="Gene3D" id="3.40.50.150">
    <property type="entry name" value="Vaccinia Virus protein VP39"/>
    <property type="match status" value="1"/>
</dbReference>
<dbReference type="InterPro" id="IPR010342">
    <property type="entry name" value="DUF938"/>
</dbReference>
<dbReference type="InterPro" id="IPR029063">
    <property type="entry name" value="SAM-dependent_MTases_sf"/>
</dbReference>
<dbReference type="PANTHER" id="PTHR20974:SF2">
    <property type="entry name" value="METHYLTRANSFERASE-LIKE 26"/>
    <property type="match status" value="1"/>
</dbReference>
<dbReference type="PANTHER" id="PTHR20974">
    <property type="entry name" value="UPF0585 PROTEIN CG18661"/>
    <property type="match status" value="1"/>
</dbReference>
<dbReference type="Pfam" id="PF06080">
    <property type="entry name" value="DUF938"/>
    <property type="match status" value="1"/>
</dbReference>
<dbReference type="SUPFAM" id="SSF53335">
    <property type="entry name" value="S-adenosyl-L-methionine-dependent methyltransferases"/>
    <property type="match status" value="1"/>
</dbReference>
<evidence type="ECO:0000250" key="1">
    <source>
        <dbReference type="UniProtKB" id="Q96S19"/>
    </source>
</evidence>
<evidence type="ECO:0000305" key="2"/>
<evidence type="ECO:0000312" key="3">
    <source>
        <dbReference type="MGI" id="MGI:1915597"/>
    </source>
</evidence>
<evidence type="ECO:0007744" key="4">
    <source>
    </source>
</evidence>
<accession>Q9DCS2</accession>
<gene>
    <name evidence="3" type="primary">Mettl26</name>
</gene>